<evidence type="ECO:0000255" key="1">
    <source>
        <dbReference type="HAMAP-Rule" id="MF_01897"/>
    </source>
</evidence>
<evidence type="ECO:0000255" key="2">
    <source>
        <dbReference type="PROSITE-ProRule" id="PRU01384"/>
    </source>
</evidence>
<evidence type="ECO:0000256" key="3">
    <source>
        <dbReference type="SAM" id="MobiDB-lite"/>
    </source>
</evidence>
<evidence type="ECO:0000305" key="4"/>
<protein>
    <recommendedName>
        <fullName evidence="1">DNA gyrase subunit A</fullName>
        <ecNumber evidence="1">5.6.2.2</ecNumber>
    </recommendedName>
</protein>
<name>GYRA_CHLPN</name>
<comment type="function">
    <text evidence="1">A type II topoisomerase that negatively supercoils closed circular double-stranded (ds) DNA in an ATP-dependent manner to modulate DNA topology and maintain chromosomes in an underwound state. Negative supercoiling favors strand separation, and DNA replication, transcription, recombination and repair, all of which involve strand separation. Also able to catalyze the interconversion of other topological isomers of dsDNA rings, including catenanes and knotted rings. Type II topoisomerases break and join 2 DNA strands simultaneously in an ATP-dependent manner.</text>
</comment>
<comment type="catalytic activity">
    <reaction evidence="1">
        <text>ATP-dependent breakage, passage and rejoining of double-stranded DNA.</text>
        <dbReference type="EC" id="5.6.2.2"/>
    </reaction>
</comment>
<comment type="subunit">
    <text evidence="1">Heterotetramer, composed of two GyrA and two GyrB chains. In the heterotetramer, GyrA contains the active site tyrosine that forms a transient covalent intermediate with DNA, while GyrB binds cofactors and catalyzes ATP hydrolysis.</text>
</comment>
<comment type="subcellular location">
    <subcellularLocation>
        <location evidence="1">Cytoplasm</location>
    </subcellularLocation>
</comment>
<comment type="miscellaneous">
    <text evidence="1">Few gyrases are as efficient as E.coli at forming negative supercoils. Not all organisms have 2 type II topoisomerases; in organisms with a single type II topoisomerase this enzyme also has to decatenate newly replicated chromosomes.</text>
</comment>
<comment type="similarity">
    <text evidence="1">Belongs to the type II topoisomerase GyrA/ParC subunit family.</text>
</comment>
<feature type="chain" id="PRO_0000145229" description="DNA gyrase subunit A">
    <location>
        <begin position="1"/>
        <end position="834"/>
    </location>
</feature>
<feature type="domain" description="Topo IIA-type catalytic" evidence="2">
    <location>
        <begin position="34"/>
        <end position="500"/>
    </location>
</feature>
<feature type="region of interest" description="Disordered" evidence="3">
    <location>
        <begin position="810"/>
        <end position="834"/>
    </location>
</feature>
<feature type="short sequence motif" description="GyrA-box" evidence="1">
    <location>
        <begin position="527"/>
        <end position="533"/>
    </location>
</feature>
<feature type="compositionally biased region" description="Acidic residues" evidence="3">
    <location>
        <begin position="814"/>
        <end position="828"/>
    </location>
</feature>
<feature type="active site" description="O-(5'-phospho-DNA)-tyrosine intermediate" evidence="1">
    <location>
        <position position="122"/>
    </location>
</feature>
<feature type="sequence conflict" description="In Ref. 1; AAD18423." evidence="4" ref="1">
    <original>T</original>
    <variation>A</variation>
    <location>
        <position position="232"/>
    </location>
</feature>
<keyword id="KW-0067">ATP-binding</keyword>
<keyword id="KW-0963">Cytoplasm</keyword>
<keyword id="KW-0238">DNA-binding</keyword>
<keyword id="KW-0413">Isomerase</keyword>
<keyword id="KW-0547">Nucleotide-binding</keyword>
<keyword id="KW-0799">Topoisomerase</keyword>
<organism>
    <name type="scientific">Chlamydia pneumoniae</name>
    <name type="common">Chlamydophila pneumoniae</name>
    <dbReference type="NCBI Taxonomy" id="83558"/>
    <lineage>
        <taxon>Bacteria</taxon>
        <taxon>Pseudomonadati</taxon>
        <taxon>Chlamydiota</taxon>
        <taxon>Chlamydiia</taxon>
        <taxon>Chlamydiales</taxon>
        <taxon>Chlamydiaceae</taxon>
        <taxon>Chlamydia/Chlamydophila group</taxon>
        <taxon>Chlamydia</taxon>
    </lineage>
</organism>
<dbReference type="EC" id="5.6.2.2" evidence="1"/>
<dbReference type="EMBL" id="AE001363">
    <property type="protein sequence ID" value="AAD18423.1"/>
    <property type="molecule type" value="Genomic_DNA"/>
</dbReference>
<dbReference type="EMBL" id="AE002161">
    <property type="protein sequence ID" value="AAF38315.1"/>
    <property type="molecule type" value="Genomic_DNA"/>
</dbReference>
<dbReference type="EMBL" id="BA000008">
    <property type="protein sequence ID" value="BAA98484.1"/>
    <property type="molecule type" value="Genomic_DNA"/>
</dbReference>
<dbReference type="EMBL" id="AE009440">
    <property type="protein sequence ID" value="AAP98214.1"/>
    <property type="molecule type" value="Genomic_DNA"/>
</dbReference>
<dbReference type="PIR" id="B86525">
    <property type="entry name" value="B86525"/>
</dbReference>
<dbReference type="PIR" id="F81571">
    <property type="entry name" value="F81571"/>
</dbReference>
<dbReference type="PIR" id="G72098">
    <property type="entry name" value="G72098"/>
</dbReference>
<dbReference type="RefSeq" id="NP_224479.1">
    <property type="nucleotide sequence ID" value="NC_000922.1"/>
</dbReference>
<dbReference type="RefSeq" id="WP_010882922.1">
    <property type="nucleotide sequence ID" value="NZ_LN847257.1"/>
</dbReference>
<dbReference type="RefSeq" id="WP_010892079.1">
    <property type="nucleotide sequence ID" value="NZ_LN847221.1"/>
</dbReference>
<dbReference type="SMR" id="Q9Z8R4"/>
<dbReference type="STRING" id="406984.CPK_ORF00782"/>
<dbReference type="GeneID" id="45050323"/>
<dbReference type="KEGG" id="cpa:CP_0485"/>
<dbReference type="KEGG" id="cpj:gyrA_1"/>
<dbReference type="KEGG" id="cpn:CPn_0274"/>
<dbReference type="KEGG" id="cpt:CpB0281"/>
<dbReference type="PATRIC" id="fig|115713.3.peg.307"/>
<dbReference type="eggNOG" id="COG0188">
    <property type="taxonomic scope" value="Bacteria"/>
</dbReference>
<dbReference type="HOGENOM" id="CLU_002977_6_1_0"/>
<dbReference type="OrthoDB" id="9806486at2"/>
<dbReference type="Proteomes" id="UP000000583">
    <property type="component" value="Chromosome"/>
</dbReference>
<dbReference type="Proteomes" id="UP000000801">
    <property type="component" value="Chromosome"/>
</dbReference>
<dbReference type="GO" id="GO:0005694">
    <property type="term" value="C:chromosome"/>
    <property type="evidence" value="ECO:0007669"/>
    <property type="project" value="InterPro"/>
</dbReference>
<dbReference type="GO" id="GO:0005737">
    <property type="term" value="C:cytoplasm"/>
    <property type="evidence" value="ECO:0007669"/>
    <property type="project" value="UniProtKB-SubCell"/>
</dbReference>
<dbReference type="GO" id="GO:0009330">
    <property type="term" value="C:DNA topoisomerase type II (double strand cut, ATP-hydrolyzing) complex"/>
    <property type="evidence" value="ECO:0007669"/>
    <property type="project" value="TreeGrafter"/>
</dbReference>
<dbReference type="GO" id="GO:0005524">
    <property type="term" value="F:ATP binding"/>
    <property type="evidence" value="ECO:0007669"/>
    <property type="project" value="UniProtKB-UniRule"/>
</dbReference>
<dbReference type="GO" id="GO:0003677">
    <property type="term" value="F:DNA binding"/>
    <property type="evidence" value="ECO:0007669"/>
    <property type="project" value="UniProtKB-UniRule"/>
</dbReference>
<dbReference type="GO" id="GO:0034335">
    <property type="term" value="F:DNA negative supercoiling activity"/>
    <property type="evidence" value="ECO:0007669"/>
    <property type="project" value="UniProtKB-ARBA"/>
</dbReference>
<dbReference type="GO" id="GO:0006265">
    <property type="term" value="P:DNA topological change"/>
    <property type="evidence" value="ECO:0007669"/>
    <property type="project" value="UniProtKB-UniRule"/>
</dbReference>
<dbReference type="GO" id="GO:0006261">
    <property type="term" value="P:DNA-templated DNA replication"/>
    <property type="evidence" value="ECO:0007669"/>
    <property type="project" value="UniProtKB-UniRule"/>
</dbReference>
<dbReference type="CDD" id="cd00187">
    <property type="entry name" value="TOP4c"/>
    <property type="match status" value="1"/>
</dbReference>
<dbReference type="FunFam" id="1.10.268.10:FF:000001">
    <property type="entry name" value="DNA gyrase subunit A"/>
    <property type="match status" value="1"/>
</dbReference>
<dbReference type="FunFam" id="3.30.1360.40:FF:000002">
    <property type="entry name" value="DNA gyrase subunit A"/>
    <property type="match status" value="1"/>
</dbReference>
<dbReference type="FunFam" id="2.120.10.90:FF:000005">
    <property type="entry name" value="DNA topoisomerase 4 subunit A"/>
    <property type="match status" value="1"/>
</dbReference>
<dbReference type="Gene3D" id="3.30.1360.40">
    <property type="match status" value="1"/>
</dbReference>
<dbReference type="Gene3D" id="2.120.10.90">
    <property type="entry name" value="DNA gyrase/topoisomerase IV, subunit A, C-terminal"/>
    <property type="match status" value="1"/>
</dbReference>
<dbReference type="Gene3D" id="3.90.199.10">
    <property type="entry name" value="Topoisomerase II, domain 5"/>
    <property type="match status" value="1"/>
</dbReference>
<dbReference type="Gene3D" id="1.10.268.10">
    <property type="entry name" value="Topoisomerase, domain 3"/>
    <property type="match status" value="1"/>
</dbReference>
<dbReference type="HAMAP" id="MF_01897">
    <property type="entry name" value="GyrA"/>
    <property type="match status" value="1"/>
</dbReference>
<dbReference type="InterPro" id="IPR005743">
    <property type="entry name" value="GyrA"/>
</dbReference>
<dbReference type="InterPro" id="IPR006691">
    <property type="entry name" value="GyrA/parC_rep"/>
</dbReference>
<dbReference type="InterPro" id="IPR035516">
    <property type="entry name" value="Gyrase/topoIV_suA_C"/>
</dbReference>
<dbReference type="InterPro" id="IPR013760">
    <property type="entry name" value="Topo_IIA-like_dom_sf"/>
</dbReference>
<dbReference type="InterPro" id="IPR013758">
    <property type="entry name" value="Topo_IIA_A/C_ab"/>
</dbReference>
<dbReference type="InterPro" id="IPR013757">
    <property type="entry name" value="Topo_IIA_A_a_sf"/>
</dbReference>
<dbReference type="InterPro" id="IPR002205">
    <property type="entry name" value="Topo_IIA_dom_A"/>
</dbReference>
<dbReference type="InterPro" id="IPR050220">
    <property type="entry name" value="Type_II_DNA_Topoisomerases"/>
</dbReference>
<dbReference type="NCBIfam" id="TIGR01063">
    <property type="entry name" value="gyrA"/>
    <property type="match status" value="1"/>
</dbReference>
<dbReference type="NCBIfam" id="NF004043">
    <property type="entry name" value="PRK05560.1"/>
    <property type="match status" value="1"/>
</dbReference>
<dbReference type="NCBIfam" id="NF004044">
    <property type="entry name" value="PRK05561.1"/>
    <property type="match status" value="1"/>
</dbReference>
<dbReference type="PANTHER" id="PTHR43493:SF5">
    <property type="entry name" value="DNA GYRASE SUBUNIT A, CHLOROPLASTIC_MITOCHONDRIAL"/>
    <property type="match status" value="1"/>
</dbReference>
<dbReference type="PANTHER" id="PTHR43493">
    <property type="entry name" value="DNA GYRASE/TOPOISOMERASE SUBUNIT A"/>
    <property type="match status" value="1"/>
</dbReference>
<dbReference type="Pfam" id="PF03989">
    <property type="entry name" value="DNA_gyraseA_C"/>
    <property type="match status" value="6"/>
</dbReference>
<dbReference type="Pfam" id="PF00521">
    <property type="entry name" value="DNA_topoisoIV"/>
    <property type="match status" value="1"/>
</dbReference>
<dbReference type="SMART" id="SM00434">
    <property type="entry name" value="TOP4c"/>
    <property type="match status" value="1"/>
</dbReference>
<dbReference type="SUPFAM" id="SSF101904">
    <property type="entry name" value="GyrA/ParC C-terminal domain-like"/>
    <property type="match status" value="1"/>
</dbReference>
<dbReference type="SUPFAM" id="SSF56719">
    <property type="entry name" value="Type II DNA topoisomerase"/>
    <property type="match status" value="1"/>
</dbReference>
<dbReference type="PROSITE" id="PS52040">
    <property type="entry name" value="TOPO_IIA"/>
    <property type="match status" value="1"/>
</dbReference>
<accession>Q9Z8R4</accession>
<accession>Q9JRY7</accession>
<reference key="1">
    <citation type="journal article" date="1999" name="Nat. Genet.">
        <title>Comparative genomes of Chlamydia pneumoniae and C. trachomatis.</title>
        <authorList>
            <person name="Kalman S."/>
            <person name="Mitchell W.P."/>
            <person name="Marathe R."/>
            <person name="Lammel C.J."/>
            <person name="Fan J."/>
            <person name="Hyman R.W."/>
            <person name="Olinger L."/>
            <person name="Grimwood J."/>
            <person name="Davis R.W."/>
            <person name="Stephens R.S."/>
        </authorList>
    </citation>
    <scope>NUCLEOTIDE SEQUENCE [LARGE SCALE GENOMIC DNA]</scope>
    <source>
        <strain>CWL029</strain>
    </source>
</reference>
<reference key="2">
    <citation type="journal article" date="2000" name="Nucleic Acids Res.">
        <title>Genome sequences of Chlamydia trachomatis MoPn and Chlamydia pneumoniae AR39.</title>
        <authorList>
            <person name="Read T.D."/>
            <person name="Brunham R.C."/>
            <person name="Shen C."/>
            <person name="Gill S.R."/>
            <person name="Heidelberg J.F."/>
            <person name="White O."/>
            <person name="Hickey E.K."/>
            <person name="Peterson J.D."/>
            <person name="Utterback T.R."/>
            <person name="Berry K.J."/>
            <person name="Bass S."/>
            <person name="Linher K.D."/>
            <person name="Weidman J.F."/>
            <person name="Khouri H.M."/>
            <person name="Craven B."/>
            <person name="Bowman C."/>
            <person name="Dodson R.J."/>
            <person name="Gwinn M.L."/>
            <person name="Nelson W.C."/>
            <person name="DeBoy R.T."/>
            <person name="Kolonay J.F."/>
            <person name="McClarty G."/>
            <person name="Salzberg S.L."/>
            <person name="Eisen J.A."/>
            <person name="Fraser C.M."/>
        </authorList>
    </citation>
    <scope>NUCLEOTIDE SEQUENCE [LARGE SCALE GENOMIC DNA]</scope>
    <source>
        <strain>AR39</strain>
    </source>
</reference>
<reference key="3">
    <citation type="journal article" date="2000" name="Nucleic Acids Res.">
        <title>Comparison of whole genome sequences of Chlamydia pneumoniae J138 from Japan and CWL029 from USA.</title>
        <authorList>
            <person name="Shirai M."/>
            <person name="Hirakawa H."/>
            <person name="Kimoto M."/>
            <person name="Tabuchi M."/>
            <person name="Kishi F."/>
            <person name="Ouchi K."/>
            <person name="Shiba T."/>
            <person name="Ishii K."/>
            <person name="Hattori M."/>
            <person name="Kuhara S."/>
            <person name="Nakazawa T."/>
        </authorList>
    </citation>
    <scope>NUCLEOTIDE SEQUENCE [LARGE SCALE GENOMIC DNA]</scope>
    <source>
        <strain>J138</strain>
    </source>
</reference>
<reference key="4">
    <citation type="submission" date="2002-05" db="EMBL/GenBank/DDBJ databases">
        <title>The genome sequence of Chlamydia pneumoniae TW183 and comparison with other Chlamydia strains based on whole genome sequence analysis.</title>
        <authorList>
            <person name="Geng M.M."/>
            <person name="Schuhmacher A."/>
            <person name="Muehldorfer I."/>
            <person name="Bensch K.W."/>
            <person name="Schaefer K.P."/>
            <person name="Schneider S."/>
            <person name="Pohl T."/>
            <person name="Essig A."/>
            <person name="Marre R."/>
            <person name="Melchers K."/>
        </authorList>
    </citation>
    <scope>NUCLEOTIDE SEQUENCE [LARGE SCALE GENOMIC DNA]</scope>
    <source>
        <strain>TW-183</strain>
    </source>
</reference>
<proteinExistence type="inferred from homology"/>
<sequence>MFNKDEIIVPKNLEEEMKESYLRYSMSVIISRALPDIRDGLKPSQRRVLYAMKQLSLSPGAKHRKCAKICGDTSGDYHPHGESVIYPTLVRMAQNWAMRYPLVDGQGNFGSIDGDPPAAMRYTEARLTHSAMYLMEDLDKDTVDIVPNYDETKHEPVVFPSKFPNLLCNGSSGIAVGMATNIPPHNLGELIEATLLLLANPQASVDEILQVMPGPDFPTGGIICGSEGIRSTYTTGRGKIKVRARLHVEENEDKHRESIIITEMPYNVNKSRLIEQIANLVNEKTLAGISDVRDESDKDGIRVVLEIKKGESSEIIINRLYKFTDVQVTFGANMLALDKNLPRTMSIHRMISAWIRHRKEVIRRRTRYELNKAETRAHVLEGYLKALSCLDALVKTIRESGNKEHAKERIIESFGFTEPQALAILELRLYQLTGLEAEKIQKEYEELLNKIAYYKQVLSDEGLVKDIIRNELQDLLKHHKVARRTTIEFDADDIRDIEDIITNESVIITISGDDYVKRMPVKVFKEQRRGGHGVTGFDMKKGAGFLKAVYSAFTKDYLLIFTNFGQCYWLKVWQLPEGERRAKGKPIINFLEGIRPGEELAAILNIKNFDNAGFLFLATKRGVVKKVSLDAFSNPRKKGIRALEIDEGDELIAACHIVSDEEKVMLFTHLGMAVRFPHEKVRPMGRTARGVRGVSLKNEEDKVVSCQIVTENQSVLIVCDQGFGKRSLVEDFRETNRGGVGVRSILINERNGNVLGAIPVTDHDSILLMSSQGQAIRINMQDVRVMGRSTQGVRLVHLKEGDALVSMEKLSSNENDDEVLSGSEEECSDTVSLR</sequence>
<gene>
    <name evidence="1" type="primary">gyrA</name>
    <name type="ordered locus">CPn_0274</name>
    <name type="ordered locus">CP_0485</name>
    <name type="ordered locus">CpB0281</name>
</gene>